<feature type="chain" id="PRO_1000075122" description="Elongation factor 4">
    <location>
        <begin position="1"/>
        <end position="608"/>
    </location>
</feature>
<feature type="domain" description="tr-type G">
    <location>
        <begin position="11"/>
        <end position="193"/>
    </location>
</feature>
<feature type="binding site" evidence="1">
    <location>
        <begin position="23"/>
        <end position="28"/>
    </location>
    <ligand>
        <name>GTP</name>
        <dbReference type="ChEBI" id="CHEBI:37565"/>
    </ligand>
</feature>
<feature type="binding site" evidence="1">
    <location>
        <begin position="140"/>
        <end position="143"/>
    </location>
    <ligand>
        <name>GTP</name>
        <dbReference type="ChEBI" id="CHEBI:37565"/>
    </ligand>
</feature>
<evidence type="ECO:0000255" key="1">
    <source>
        <dbReference type="HAMAP-Rule" id="MF_00071"/>
    </source>
</evidence>
<name>LEPA_BACCN</name>
<protein>
    <recommendedName>
        <fullName evidence="1">Elongation factor 4</fullName>
        <shortName evidence="1">EF-4</shortName>
        <ecNumber evidence="1">3.6.5.n1</ecNumber>
    </recommendedName>
    <alternativeName>
        <fullName evidence="1">Ribosomal back-translocase LepA</fullName>
    </alternativeName>
</protein>
<comment type="function">
    <text evidence="1">Required for accurate and efficient protein synthesis under certain stress conditions. May act as a fidelity factor of the translation reaction, by catalyzing a one-codon backward translocation of tRNAs on improperly translocated ribosomes. Back-translocation proceeds from a post-translocation (POST) complex to a pre-translocation (PRE) complex, thus giving elongation factor G a second chance to translocate the tRNAs correctly. Binds to ribosomes in a GTP-dependent manner.</text>
</comment>
<comment type="catalytic activity">
    <reaction evidence="1">
        <text>GTP + H2O = GDP + phosphate + H(+)</text>
        <dbReference type="Rhea" id="RHEA:19669"/>
        <dbReference type="ChEBI" id="CHEBI:15377"/>
        <dbReference type="ChEBI" id="CHEBI:15378"/>
        <dbReference type="ChEBI" id="CHEBI:37565"/>
        <dbReference type="ChEBI" id="CHEBI:43474"/>
        <dbReference type="ChEBI" id="CHEBI:58189"/>
        <dbReference type="EC" id="3.6.5.n1"/>
    </reaction>
</comment>
<comment type="subcellular location">
    <subcellularLocation>
        <location evidence="1">Cell membrane</location>
        <topology evidence="1">Peripheral membrane protein</topology>
        <orientation evidence="1">Cytoplasmic side</orientation>
    </subcellularLocation>
</comment>
<comment type="similarity">
    <text evidence="1">Belongs to the TRAFAC class translation factor GTPase superfamily. Classic translation factor GTPase family. LepA subfamily.</text>
</comment>
<reference key="1">
    <citation type="journal article" date="2008" name="Chem. Biol. Interact.">
        <title>Extending the Bacillus cereus group genomics to putative food-borne pathogens of different toxicity.</title>
        <authorList>
            <person name="Lapidus A."/>
            <person name="Goltsman E."/>
            <person name="Auger S."/>
            <person name="Galleron N."/>
            <person name="Segurens B."/>
            <person name="Dossat C."/>
            <person name="Land M.L."/>
            <person name="Broussolle V."/>
            <person name="Brillard J."/>
            <person name="Guinebretiere M.-H."/>
            <person name="Sanchis V."/>
            <person name="Nguen-the C."/>
            <person name="Lereclus D."/>
            <person name="Richardson P."/>
            <person name="Wincker P."/>
            <person name="Weissenbach J."/>
            <person name="Ehrlich S.D."/>
            <person name="Sorokin A."/>
        </authorList>
    </citation>
    <scope>NUCLEOTIDE SEQUENCE [LARGE SCALE GENOMIC DNA]</scope>
    <source>
        <strain>DSM 22905 / CIP 110041 / 391-98 / NVH 391-98</strain>
    </source>
</reference>
<organism>
    <name type="scientific">Bacillus cytotoxicus (strain DSM 22905 / CIP 110041 / 391-98 / NVH 391-98)</name>
    <dbReference type="NCBI Taxonomy" id="315749"/>
    <lineage>
        <taxon>Bacteria</taxon>
        <taxon>Bacillati</taxon>
        <taxon>Bacillota</taxon>
        <taxon>Bacilli</taxon>
        <taxon>Bacillales</taxon>
        <taxon>Bacillaceae</taxon>
        <taxon>Bacillus</taxon>
        <taxon>Bacillus cereus group</taxon>
    </lineage>
</organism>
<keyword id="KW-1003">Cell membrane</keyword>
<keyword id="KW-0342">GTP-binding</keyword>
<keyword id="KW-0378">Hydrolase</keyword>
<keyword id="KW-0472">Membrane</keyword>
<keyword id="KW-0547">Nucleotide-binding</keyword>
<keyword id="KW-0648">Protein biosynthesis</keyword>
<proteinExistence type="inferred from homology"/>
<dbReference type="EC" id="3.6.5.n1" evidence="1"/>
<dbReference type="EMBL" id="CP000764">
    <property type="protein sequence ID" value="ABS23272.1"/>
    <property type="molecule type" value="Genomic_DNA"/>
</dbReference>
<dbReference type="RefSeq" id="WP_012095509.1">
    <property type="nucleotide sequence ID" value="NC_009674.1"/>
</dbReference>
<dbReference type="SMR" id="A7GT14"/>
<dbReference type="STRING" id="315749.Bcer98_3046"/>
<dbReference type="GeneID" id="33898292"/>
<dbReference type="KEGG" id="bcy:Bcer98_3046"/>
<dbReference type="eggNOG" id="COG0481">
    <property type="taxonomic scope" value="Bacteria"/>
</dbReference>
<dbReference type="HOGENOM" id="CLU_009995_3_3_9"/>
<dbReference type="OrthoDB" id="9804431at2"/>
<dbReference type="Proteomes" id="UP000002300">
    <property type="component" value="Chromosome"/>
</dbReference>
<dbReference type="GO" id="GO:0005886">
    <property type="term" value="C:plasma membrane"/>
    <property type="evidence" value="ECO:0007669"/>
    <property type="project" value="UniProtKB-SubCell"/>
</dbReference>
<dbReference type="GO" id="GO:0005525">
    <property type="term" value="F:GTP binding"/>
    <property type="evidence" value="ECO:0007669"/>
    <property type="project" value="UniProtKB-UniRule"/>
</dbReference>
<dbReference type="GO" id="GO:0003924">
    <property type="term" value="F:GTPase activity"/>
    <property type="evidence" value="ECO:0007669"/>
    <property type="project" value="UniProtKB-UniRule"/>
</dbReference>
<dbReference type="GO" id="GO:0043022">
    <property type="term" value="F:ribosome binding"/>
    <property type="evidence" value="ECO:0007669"/>
    <property type="project" value="UniProtKB-UniRule"/>
</dbReference>
<dbReference type="GO" id="GO:0003746">
    <property type="term" value="F:translation elongation factor activity"/>
    <property type="evidence" value="ECO:0007669"/>
    <property type="project" value="UniProtKB-UniRule"/>
</dbReference>
<dbReference type="GO" id="GO:0045727">
    <property type="term" value="P:positive regulation of translation"/>
    <property type="evidence" value="ECO:0007669"/>
    <property type="project" value="UniProtKB-UniRule"/>
</dbReference>
<dbReference type="CDD" id="cd03699">
    <property type="entry name" value="EF4_II"/>
    <property type="match status" value="1"/>
</dbReference>
<dbReference type="CDD" id="cd16260">
    <property type="entry name" value="EF4_III"/>
    <property type="match status" value="1"/>
</dbReference>
<dbReference type="CDD" id="cd01890">
    <property type="entry name" value="LepA"/>
    <property type="match status" value="1"/>
</dbReference>
<dbReference type="CDD" id="cd03709">
    <property type="entry name" value="lepA_C"/>
    <property type="match status" value="1"/>
</dbReference>
<dbReference type="FunFam" id="3.40.50.300:FF:000078">
    <property type="entry name" value="Elongation factor 4"/>
    <property type="match status" value="1"/>
</dbReference>
<dbReference type="FunFam" id="2.40.30.10:FF:000015">
    <property type="entry name" value="Translation factor GUF1, mitochondrial"/>
    <property type="match status" value="1"/>
</dbReference>
<dbReference type="FunFam" id="3.30.70.240:FF:000007">
    <property type="entry name" value="Translation factor GUF1, mitochondrial"/>
    <property type="match status" value="1"/>
</dbReference>
<dbReference type="FunFam" id="3.30.70.2570:FF:000001">
    <property type="entry name" value="Translation factor GUF1, mitochondrial"/>
    <property type="match status" value="1"/>
</dbReference>
<dbReference type="FunFam" id="3.30.70.870:FF:000004">
    <property type="entry name" value="Translation factor GUF1, mitochondrial"/>
    <property type="match status" value="1"/>
</dbReference>
<dbReference type="Gene3D" id="3.30.70.240">
    <property type="match status" value="1"/>
</dbReference>
<dbReference type="Gene3D" id="3.30.70.2570">
    <property type="entry name" value="Elongation factor 4, C-terminal domain"/>
    <property type="match status" value="1"/>
</dbReference>
<dbReference type="Gene3D" id="3.30.70.870">
    <property type="entry name" value="Elongation Factor G (Translational Gtpase), domain 3"/>
    <property type="match status" value="1"/>
</dbReference>
<dbReference type="Gene3D" id="3.40.50.300">
    <property type="entry name" value="P-loop containing nucleotide triphosphate hydrolases"/>
    <property type="match status" value="1"/>
</dbReference>
<dbReference type="Gene3D" id="2.40.30.10">
    <property type="entry name" value="Translation factors"/>
    <property type="match status" value="1"/>
</dbReference>
<dbReference type="HAMAP" id="MF_00071">
    <property type="entry name" value="LepA"/>
    <property type="match status" value="1"/>
</dbReference>
<dbReference type="InterPro" id="IPR006297">
    <property type="entry name" value="EF-4"/>
</dbReference>
<dbReference type="InterPro" id="IPR035647">
    <property type="entry name" value="EFG_III/V"/>
</dbReference>
<dbReference type="InterPro" id="IPR000640">
    <property type="entry name" value="EFG_V-like"/>
</dbReference>
<dbReference type="InterPro" id="IPR004161">
    <property type="entry name" value="EFTu-like_2"/>
</dbReference>
<dbReference type="InterPro" id="IPR031157">
    <property type="entry name" value="G_TR_CS"/>
</dbReference>
<dbReference type="InterPro" id="IPR038363">
    <property type="entry name" value="LepA_C_sf"/>
</dbReference>
<dbReference type="InterPro" id="IPR013842">
    <property type="entry name" value="LepA_CTD"/>
</dbReference>
<dbReference type="InterPro" id="IPR035654">
    <property type="entry name" value="LepA_IV"/>
</dbReference>
<dbReference type="InterPro" id="IPR027417">
    <property type="entry name" value="P-loop_NTPase"/>
</dbReference>
<dbReference type="InterPro" id="IPR005225">
    <property type="entry name" value="Small_GTP-bd"/>
</dbReference>
<dbReference type="InterPro" id="IPR000795">
    <property type="entry name" value="T_Tr_GTP-bd_dom"/>
</dbReference>
<dbReference type="InterPro" id="IPR009000">
    <property type="entry name" value="Transl_B-barrel_sf"/>
</dbReference>
<dbReference type="NCBIfam" id="TIGR01393">
    <property type="entry name" value="lepA"/>
    <property type="match status" value="1"/>
</dbReference>
<dbReference type="NCBIfam" id="TIGR00231">
    <property type="entry name" value="small_GTP"/>
    <property type="match status" value="1"/>
</dbReference>
<dbReference type="PANTHER" id="PTHR43512:SF4">
    <property type="entry name" value="TRANSLATION FACTOR GUF1 HOMOLOG, CHLOROPLASTIC"/>
    <property type="match status" value="1"/>
</dbReference>
<dbReference type="PANTHER" id="PTHR43512">
    <property type="entry name" value="TRANSLATION FACTOR GUF1-RELATED"/>
    <property type="match status" value="1"/>
</dbReference>
<dbReference type="Pfam" id="PF00679">
    <property type="entry name" value="EFG_C"/>
    <property type="match status" value="1"/>
</dbReference>
<dbReference type="Pfam" id="PF00009">
    <property type="entry name" value="GTP_EFTU"/>
    <property type="match status" value="1"/>
</dbReference>
<dbReference type="Pfam" id="PF03144">
    <property type="entry name" value="GTP_EFTU_D2"/>
    <property type="match status" value="1"/>
</dbReference>
<dbReference type="Pfam" id="PF06421">
    <property type="entry name" value="LepA_C"/>
    <property type="match status" value="1"/>
</dbReference>
<dbReference type="PRINTS" id="PR00315">
    <property type="entry name" value="ELONGATNFCT"/>
</dbReference>
<dbReference type="SMART" id="SM00838">
    <property type="entry name" value="EFG_C"/>
    <property type="match status" value="1"/>
</dbReference>
<dbReference type="SUPFAM" id="SSF54980">
    <property type="entry name" value="EF-G C-terminal domain-like"/>
    <property type="match status" value="2"/>
</dbReference>
<dbReference type="SUPFAM" id="SSF52540">
    <property type="entry name" value="P-loop containing nucleoside triphosphate hydrolases"/>
    <property type="match status" value="1"/>
</dbReference>
<dbReference type="SUPFAM" id="SSF50447">
    <property type="entry name" value="Translation proteins"/>
    <property type="match status" value="1"/>
</dbReference>
<dbReference type="PROSITE" id="PS00301">
    <property type="entry name" value="G_TR_1"/>
    <property type="match status" value="1"/>
</dbReference>
<dbReference type="PROSITE" id="PS51722">
    <property type="entry name" value="G_TR_2"/>
    <property type="match status" value="1"/>
</dbReference>
<sequence>MNKEERAKRQSKIRNFSIIAHIDHGKSTLADRILEKTNALTQREMKAQLLDSMDLERERGITIKLNAVQLTYKAKDGEEYILHLIDTPGHVDFTYEVSRSLAACEGAILVVDAAQGIEAQTLANVYLALDNDLEILPVINKIDLPSADPERVRQEVEDVIGLDASEAVLASAKAGIGIEEILEQIVEKVPAPDGDPEEPLQCMIFDSLYDPYRGVIAYIRVVNGTVKVGDKVRMMATGKEFEVTEVGVFTPKTTQRDELTVGDVGFLAASIKNVGDTRVGDTITHAKRPAAEPLPGYRKLNPMVFCGLYPIDTARYNDLREALEKLQLNDSALEFEPETSQALGFGFRCGFLGLLHMEIIQERIEREFKIDLITTAPSVIYKVYLTNGEEIVVDNPSNMPDPQSIDRVEEPYVKASIMVPNDYVGAVMEICQGKRGTFIDMQYLDETRVTLTYEIPLSEIVYDFFDQLKSNTKGYASFDYELIGYQVSKLVKMDILLNGEQVDALSFIVHRDSAYDRGKVIVEKLKELIPRQQFEVPIQAAIGNKIVARSTIKAMRKNVLAKCYGGDISRKRKLLEKQKEGKKRMKSVGSVEVPQEAFMAVLRMDDDK</sequence>
<gene>
    <name evidence="1" type="primary">lepA</name>
    <name type="ordered locus">Bcer98_3046</name>
</gene>
<accession>A7GT14</accession>